<sequence>MYAYVKGKLTHLYPTHVVVETAGVGYEIQTPNSYRFQKHLDHEVLIRTSLIVREDAQLLYGFSSEEEKDMFLSLIKVTGIGPKSALAILATSTPNEVKRAIENENDTYLTKFPGIGKKTARQIVLDLKGKVKITEEDSDSLLQVDATSTVQDQFVQEAMLALEALGYSKRELAKVEKTLNKNKYDSVDEAVKAGLQLVVS</sequence>
<comment type="function">
    <text evidence="1">The RuvA-RuvB-RuvC complex processes Holliday junction (HJ) DNA during genetic recombination and DNA repair, while the RuvA-RuvB complex plays an important role in the rescue of blocked DNA replication forks via replication fork reversal (RFR). RuvA specifically binds to HJ cruciform DNA, conferring on it an open structure. The RuvB hexamer acts as an ATP-dependent pump, pulling dsDNA into and through the RuvAB complex. HJ branch migration allows RuvC to scan DNA until it finds its consensus sequence, where it cleaves and resolves the cruciform DNA.</text>
</comment>
<comment type="subunit">
    <text evidence="1">Homotetramer. Forms an RuvA(8)-RuvB(12)-Holliday junction (HJ) complex. HJ DNA is sandwiched between 2 RuvA tetramers; dsDNA enters through RuvA and exits via RuvB. An RuvB hexamer assembles on each DNA strand where it exits the tetramer. Each RuvB hexamer is contacted by two RuvA subunits (via domain III) on 2 adjacent RuvB subunits; this complex drives branch migration. In the full resolvosome a probable DNA-RuvA(4)-RuvB(12)-RuvC(2) complex forms which resolves the HJ.</text>
</comment>
<comment type="subcellular location">
    <subcellularLocation>
        <location evidence="1">Cytoplasm</location>
    </subcellularLocation>
</comment>
<comment type="domain">
    <text evidence="1">Has three domains with a flexible linker between the domains II and III and assumes an 'L' shape. Domain III is highly mobile and contacts RuvB.</text>
</comment>
<comment type="similarity">
    <text evidence="1">Belongs to the RuvA family.</text>
</comment>
<reference key="1">
    <citation type="submission" date="2007-05" db="EMBL/GenBank/DDBJ databases">
        <title>Complete sequence of chromosome of Staphylococcus aureus subsp. aureus JH9.</title>
        <authorList>
            <consortium name="US DOE Joint Genome Institute"/>
            <person name="Copeland A."/>
            <person name="Lucas S."/>
            <person name="Lapidus A."/>
            <person name="Barry K."/>
            <person name="Detter J.C."/>
            <person name="Glavina del Rio T."/>
            <person name="Hammon N."/>
            <person name="Israni S."/>
            <person name="Pitluck S."/>
            <person name="Chain P."/>
            <person name="Malfatti S."/>
            <person name="Shin M."/>
            <person name="Vergez L."/>
            <person name="Schmutz J."/>
            <person name="Larimer F."/>
            <person name="Land M."/>
            <person name="Hauser L."/>
            <person name="Kyrpides N."/>
            <person name="Kim E."/>
            <person name="Tomasz A."/>
            <person name="Richardson P."/>
        </authorList>
    </citation>
    <scope>NUCLEOTIDE SEQUENCE [LARGE SCALE GENOMIC DNA]</scope>
    <source>
        <strain>JH9</strain>
    </source>
</reference>
<keyword id="KW-0963">Cytoplasm</keyword>
<keyword id="KW-0227">DNA damage</keyword>
<keyword id="KW-0233">DNA recombination</keyword>
<keyword id="KW-0234">DNA repair</keyword>
<keyword id="KW-0238">DNA-binding</keyword>
<organism>
    <name type="scientific">Staphylococcus aureus (strain JH9)</name>
    <dbReference type="NCBI Taxonomy" id="359786"/>
    <lineage>
        <taxon>Bacteria</taxon>
        <taxon>Bacillati</taxon>
        <taxon>Bacillota</taxon>
        <taxon>Bacilli</taxon>
        <taxon>Bacillales</taxon>
        <taxon>Staphylococcaceae</taxon>
        <taxon>Staphylococcus</taxon>
    </lineage>
</organism>
<dbReference type="EMBL" id="CP000703">
    <property type="protein sequence ID" value="ABQ49489.1"/>
    <property type="molecule type" value="Genomic_DNA"/>
</dbReference>
<dbReference type="RefSeq" id="WP_000271550.1">
    <property type="nucleotide sequence ID" value="NC_009487.1"/>
</dbReference>
<dbReference type="SMR" id="A5ITG6"/>
<dbReference type="KEGG" id="saj:SaurJH9_1699"/>
<dbReference type="HOGENOM" id="CLU_087936_1_0_9"/>
<dbReference type="GO" id="GO:0005737">
    <property type="term" value="C:cytoplasm"/>
    <property type="evidence" value="ECO:0007669"/>
    <property type="project" value="UniProtKB-SubCell"/>
</dbReference>
<dbReference type="GO" id="GO:0009379">
    <property type="term" value="C:Holliday junction helicase complex"/>
    <property type="evidence" value="ECO:0007669"/>
    <property type="project" value="InterPro"/>
</dbReference>
<dbReference type="GO" id="GO:0048476">
    <property type="term" value="C:Holliday junction resolvase complex"/>
    <property type="evidence" value="ECO:0007669"/>
    <property type="project" value="UniProtKB-UniRule"/>
</dbReference>
<dbReference type="GO" id="GO:0005524">
    <property type="term" value="F:ATP binding"/>
    <property type="evidence" value="ECO:0007669"/>
    <property type="project" value="InterPro"/>
</dbReference>
<dbReference type="GO" id="GO:0000400">
    <property type="term" value="F:four-way junction DNA binding"/>
    <property type="evidence" value="ECO:0007669"/>
    <property type="project" value="UniProtKB-UniRule"/>
</dbReference>
<dbReference type="GO" id="GO:0009378">
    <property type="term" value="F:four-way junction helicase activity"/>
    <property type="evidence" value="ECO:0007669"/>
    <property type="project" value="InterPro"/>
</dbReference>
<dbReference type="GO" id="GO:0006310">
    <property type="term" value="P:DNA recombination"/>
    <property type="evidence" value="ECO:0007669"/>
    <property type="project" value="UniProtKB-UniRule"/>
</dbReference>
<dbReference type="GO" id="GO:0006281">
    <property type="term" value="P:DNA repair"/>
    <property type="evidence" value="ECO:0007669"/>
    <property type="project" value="UniProtKB-UniRule"/>
</dbReference>
<dbReference type="CDD" id="cd14332">
    <property type="entry name" value="UBA_RuvA_C"/>
    <property type="match status" value="1"/>
</dbReference>
<dbReference type="Gene3D" id="1.10.150.20">
    <property type="entry name" value="5' to 3' exonuclease, C-terminal subdomain"/>
    <property type="match status" value="1"/>
</dbReference>
<dbReference type="Gene3D" id="1.10.8.10">
    <property type="entry name" value="DNA helicase RuvA subunit, C-terminal domain"/>
    <property type="match status" value="1"/>
</dbReference>
<dbReference type="Gene3D" id="2.40.50.140">
    <property type="entry name" value="Nucleic acid-binding proteins"/>
    <property type="match status" value="1"/>
</dbReference>
<dbReference type="HAMAP" id="MF_00031">
    <property type="entry name" value="DNA_HJ_migration_RuvA"/>
    <property type="match status" value="1"/>
</dbReference>
<dbReference type="InterPro" id="IPR013849">
    <property type="entry name" value="DNA_helicase_Holl-junc_RuvA_I"/>
</dbReference>
<dbReference type="InterPro" id="IPR003583">
    <property type="entry name" value="Hlx-hairpin-Hlx_DNA-bd_motif"/>
</dbReference>
<dbReference type="InterPro" id="IPR012340">
    <property type="entry name" value="NA-bd_OB-fold"/>
</dbReference>
<dbReference type="InterPro" id="IPR000085">
    <property type="entry name" value="RuvA"/>
</dbReference>
<dbReference type="InterPro" id="IPR010994">
    <property type="entry name" value="RuvA_2-like"/>
</dbReference>
<dbReference type="InterPro" id="IPR011114">
    <property type="entry name" value="RuvA_C"/>
</dbReference>
<dbReference type="InterPro" id="IPR036267">
    <property type="entry name" value="RuvA_C_sf"/>
</dbReference>
<dbReference type="NCBIfam" id="TIGR00084">
    <property type="entry name" value="ruvA"/>
    <property type="match status" value="1"/>
</dbReference>
<dbReference type="Pfam" id="PF14520">
    <property type="entry name" value="HHH_5"/>
    <property type="match status" value="1"/>
</dbReference>
<dbReference type="Pfam" id="PF07499">
    <property type="entry name" value="RuvA_C"/>
    <property type="match status" value="1"/>
</dbReference>
<dbReference type="Pfam" id="PF01330">
    <property type="entry name" value="RuvA_N"/>
    <property type="match status" value="1"/>
</dbReference>
<dbReference type="SMART" id="SM00278">
    <property type="entry name" value="HhH1"/>
    <property type="match status" value="2"/>
</dbReference>
<dbReference type="SUPFAM" id="SSF46929">
    <property type="entry name" value="DNA helicase RuvA subunit, C-terminal domain"/>
    <property type="match status" value="1"/>
</dbReference>
<dbReference type="SUPFAM" id="SSF50249">
    <property type="entry name" value="Nucleic acid-binding proteins"/>
    <property type="match status" value="1"/>
</dbReference>
<dbReference type="SUPFAM" id="SSF47781">
    <property type="entry name" value="RuvA domain 2-like"/>
    <property type="match status" value="1"/>
</dbReference>
<feature type="chain" id="PRO_1000074442" description="Holliday junction branch migration complex subunit RuvA">
    <location>
        <begin position="1"/>
        <end position="200"/>
    </location>
</feature>
<feature type="region of interest" description="Domain I" evidence="1">
    <location>
        <begin position="1"/>
        <end position="63"/>
    </location>
</feature>
<feature type="region of interest" description="Domain II" evidence="1">
    <location>
        <begin position="64"/>
        <end position="142"/>
    </location>
</feature>
<feature type="region of interest" description="Flexible linker" evidence="1">
    <location>
        <begin position="143"/>
        <end position="149"/>
    </location>
</feature>
<feature type="region of interest" description="Domain III" evidence="1">
    <location>
        <begin position="150"/>
        <end position="200"/>
    </location>
</feature>
<evidence type="ECO:0000255" key="1">
    <source>
        <dbReference type="HAMAP-Rule" id="MF_00031"/>
    </source>
</evidence>
<proteinExistence type="inferred from homology"/>
<gene>
    <name evidence="1" type="primary">ruvA</name>
    <name type="ordered locus">SaurJH9_1699</name>
</gene>
<protein>
    <recommendedName>
        <fullName evidence="1">Holliday junction branch migration complex subunit RuvA</fullName>
    </recommendedName>
</protein>
<accession>A5ITG6</accession>
<name>RUVA_STAA9</name>